<gene>
    <name evidence="2" type="primary">arcB</name>
    <name type="ordered locus">RALTA_A2538</name>
</gene>
<comment type="function">
    <text evidence="1">Reversibly catalyzes the transfer of the carbamoyl group from carbamoyl phosphate (CP) to the N(epsilon) atom of ornithine (ORN) to produce L-citrulline.</text>
</comment>
<comment type="catalytic activity">
    <reaction evidence="2">
        <text>carbamoyl phosphate + L-ornithine = L-citrulline + phosphate + H(+)</text>
        <dbReference type="Rhea" id="RHEA:19513"/>
        <dbReference type="ChEBI" id="CHEBI:15378"/>
        <dbReference type="ChEBI" id="CHEBI:43474"/>
        <dbReference type="ChEBI" id="CHEBI:46911"/>
        <dbReference type="ChEBI" id="CHEBI:57743"/>
        <dbReference type="ChEBI" id="CHEBI:58228"/>
        <dbReference type="EC" id="2.1.3.3"/>
    </reaction>
</comment>
<comment type="pathway">
    <text evidence="2">Amino-acid degradation; L-arginine degradation via ADI pathway; carbamoyl phosphate from L-arginine: step 2/2.</text>
</comment>
<comment type="subcellular location">
    <subcellularLocation>
        <location evidence="2">Cytoplasm</location>
    </subcellularLocation>
</comment>
<comment type="similarity">
    <text evidence="2">Belongs to the aspartate/ornithine carbamoyltransferase superfamily. OTCase family.</text>
</comment>
<organism>
    <name type="scientific">Cupriavidus taiwanensis (strain DSM 17343 / BCRC 17206 / CCUG 44338 / CIP 107171 / LMG 19424 / R1)</name>
    <name type="common">Ralstonia taiwanensis (strain LMG 19424)</name>
    <dbReference type="NCBI Taxonomy" id="977880"/>
    <lineage>
        <taxon>Bacteria</taxon>
        <taxon>Pseudomonadati</taxon>
        <taxon>Pseudomonadota</taxon>
        <taxon>Betaproteobacteria</taxon>
        <taxon>Burkholderiales</taxon>
        <taxon>Burkholderiaceae</taxon>
        <taxon>Cupriavidus</taxon>
    </lineage>
</organism>
<feature type="chain" id="PRO_1000137093" description="Ornithine carbamoyltransferase">
    <location>
        <begin position="1"/>
        <end position="307"/>
    </location>
</feature>
<feature type="binding site" evidence="2">
    <location>
        <begin position="56"/>
        <end position="59"/>
    </location>
    <ligand>
        <name>carbamoyl phosphate</name>
        <dbReference type="ChEBI" id="CHEBI:58228"/>
    </ligand>
</feature>
<feature type="binding site" evidence="2">
    <location>
        <position position="83"/>
    </location>
    <ligand>
        <name>carbamoyl phosphate</name>
        <dbReference type="ChEBI" id="CHEBI:58228"/>
    </ligand>
</feature>
<feature type="binding site" evidence="2">
    <location>
        <position position="107"/>
    </location>
    <ligand>
        <name>carbamoyl phosphate</name>
        <dbReference type="ChEBI" id="CHEBI:58228"/>
    </ligand>
</feature>
<feature type="binding site" evidence="2">
    <location>
        <begin position="134"/>
        <end position="137"/>
    </location>
    <ligand>
        <name>carbamoyl phosphate</name>
        <dbReference type="ChEBI" id="CHEBI:58228"/>
    </ligand>
</feature>
<feature type="binding site" evidence="2">
    <location>
        <position position="165"/>
    </location>
    <ligand>
        <name>L-ornithine</name>
        <dbReference type="ChEBI" id="CHEBI:46911"/>
    </ligand>
</feature>
<feature type="binding site" evidence="2">
    <location>
        <position position="223"/>
    </location>
    <ligand>
        <name>L-ornithine</name>
        <dbReference type="ChEBI" id="CHEBI:46911"/>
    </ligand>
</feature>
<feature type="binding site" evidence="2">
    <location>
        <begin position="227"/>
        <end position="228"/>
    </location>
    <ligand>
        <name>L-ornithine</name>
        <dbReference type="ChEBI" id="CHEBI:46911"/>
    </ligand>
</feature>
<feature type="binding site" evidence="2">
    <location>
        <begin position="263"/>
        <end position="264"/>
    </location>
    <ligand>
        <name>carbamoyl phosphate</name>
        <dbReference type="ChEBI" id="CHEBI:58228"/>
    </ligand>
</feature>
<feature type="binding site" evidence="2">
    <location>
        <position position="291"/>
    </location>
    <ligand>
        <name>carbamoyl phosphate</name>
        <dbReference type="ChEBI" id="CHEBI:58228"/>
    </ligand>
</feature>
<dbReference type="EC" id="2.1.3.3" evidence="2"/>
<dbReference type="EMBL" id="CU633749">
    <property type="protein sequence ID" value="CAQ70469.1"/>
    <property type="molecule type" value="Genomic_DNA"/>
</dbReference>
<dbReference type="RefSeq" id="WP_012353766.1">
    <property type="nucleotide sequence ID" value="NC_010528.1"/>
</dbReference>
<dbReference type="SMR" id="B3R6D6"/>
<dbReference type="GeneID" id="29762468"/>
<dbReference type="KEGG" id="cti:RALTA_A2538"/>
<dbReference type="eggNOG" id="COG0078">
    <property type="taxonomic scope" value="Bacteria"/>
</dbReference>
<dbReference type="HOGENOM" id="CLU_043846_3_2_4"/>
<dbReference type="BioCyc" id="CTAI977880:RALTA_RS12340-MONOMER"/>
<dbReference type="UniPathway" id="UPA00254">
    <property type="reaction ID" value="UER00365"/>
</dbReference>
<dbReference type="Proteomes" id="UP000001692">
    <property type="component" value="Chromosome 1"/>
</dbReference>
<dbReference type="GO" id="GO:0005737">
    <property type="term" value="C:cytoplasm"/>
    <property type="evidence" value="ECO:0007669"/>
    <property type="project" value="UniProtKB-SubCell"/>
</dbReference>
<dbReference type="GO" id="GO:0016597">
    <property type="term" value="F:amino acid binding"/>
    <property type="evidence" value="ECO:0007669"/>
    <property type="project" value="InterPro"/>
</dbReference>
<dbReference type="GO" id="GO:0004585">
    <property type="term" value="F:ornithine carbamoyltransferase activity"/>
    <property type="evidence" value="ECO:0007669"/>
    <property type="project" value="UniProtKB-UniRule"/>
</dbReference>
<dbReference type="GO" id="GO:0042450">
    <property type="term" value="P:arginine biosynthetic process via ornithine"/>
    <property type="evidence" value="ECO:0007669"/>
    <property type="project" value="TreeGrafter"/>
</dbReference>
<dbReference type="GO" id="GO:0019547">
    <property type="term" value="P:arginine catabolic process to ornithine"/>
    <property type="evidence" value="ECO:0007669"/>
    <property type="project" value="UniProtKB-UniRule"/>
</dbReference>
<dbReference type="GO" id="GO:0019240">
    <property type="term" value="P:citrulline biosynthetic process"/>
    <property type="evidence" value="ECO:0007669"/>
    <property type="project" value="TreeGrafter"/>
</dbReference>
<dbReference type="FunFam" id="3.40.50.1370:FF:000008">
    <property type="entry name" value="Ornithine carbamoyltransferase"/>
    <property type="match status" value="1"/>
</dbReference>
<dbReference type="Gene3D" id="3.40.50.1370">
    <property type="entry name" value="Aspartate/ornithine carbamoyltransferase"/>
    <property type="match status" value="2"/>
</dbReference>
<dbReference type="HAMAP" id="MF_01109">
    <property type="entry name" value="OTCase"/>
    <property type="match status" value="1"/>
</dbReference>
<dbReference type="InterPro" id="IPR006132">
    <property type="entry name" value="Asp/Orn_carbamoyltranf_P-bd"/>
</dbReference>
<dbReference type="InterPro" id="IPR006130">
    <property type="entry name" value="Asp/Orn_carbamoylTrfase"/>
</dbReference>
<dbReference type="InterPro" id="IPR036901">
    <property type="entry name" value="Asp/Orn_carbamoylTrfase_sf"/>
</dbReference>
<dbReference type="InterPro" id="IPR006131">
    <property type="entry name" value="Asp_carbamoyltransf_Asp/Orn-bd"/>
</dbReference>
<dbReference type="InterPro" id="IPR002292">
    <property type="entry name" value="Orn/put_carbamltrans"/>
</dbReference>
<dbReference type="InterPro" id="IPR024904">
    <property type="entry name" value="OTCase_ArgI"/>
</dbReference>
<dbReference type="NCBIfam" id="TIGR00658">
    <property type="entry name" value="orni_carb_tr"/>
    <property type="match status" value="1"/>
</dbReference>
<dbReference type="NCBIfam" id="NF001986">
    <property type="entry name" value="PRK00779.1"/>
    <property type="match status" value="1"/>
</dbReference>
<dbReference type="PANTHER" id="PTHR45753">
    <property type="entry name" value="ORNITHINE CARBAMOYLTRANSFERASE, MITOCHONDRIAL"/>
    <property type="match status" value="1"/>
</dbReference>
<dbReference type="PANTHER" id="PTHR45753:SF3">
    <property type="entry name" value="ORNITHINE TRANSCARBAMYLASE, MITOCHONDRIAL"/>
    <property type="match status" value="1"/>
</dbReference>
<dbReference type="Pfam" id="PF00185">
    <property type="entry name" value="OTCace"/>
    <property type="match status" value="1"/>
</dbReference>
<dbReference type="Pfam" id="PF02729">
    <property type="entry name" value="OTCace_N"/>
    <property type="match status" value="1"/>
</dbReference>
<dbReference type="PRINTS" id="PR00100">
    <property type="entry name" value="AOTCASE"/>
</dbReference>
<dbReference type="PRINTS" id="PR00102">
    <property type="entry name" value="OTCASE"/>
</dbReference>
<dbReference type="SUPFAM" id="SSF53671">
    <property type="entry name" value="Aspartate/ornithine carbamoyltransferase"/>
    <property type="match status" value="1"/>
</dbReference>
<dbReference type="PROSITE" id="PS00097">
    <property type="entry name" value="CARBAMOYLTRANSFERASE"/>
    <property type="match status" value="1"/>
</dbReference>
<reference key="1">
    <citation type="journal article" date="2008" name="Genome Res.">
        <title>Genome sequence of the beta-rhizobium Cupriavidus taiwanensis and comparative genomics of rhizobia.</title>
        <authorList>
            <person name="Amadou C."/>
            <person name="Pascal G."/>
            <person name="Mangenot S."/>
            <person name="Glew M."/>
            <person name="Bontemps C."/>
            <person name="Capela D."/>
            <person name="Carrere S."/>
            <person name="Cruveiller S."/>
            <person name="Dossat C."/>
            <person name="Lajus A."/>
            <person name="Marchetti M."/>
            <person name="Poinsot V."/>
            <person name="Rouy Z."/>
            <person name="Servin B."/>
            <person name="Saad M."/>
            <person name="Schenowitz C."/>
            <person name="Barbe V."/>
            <person name="Batut J."/>
            <person name="Medigue C."/>
            <person name="Masson-Boivin C."/>
        </authorList>
    </citation>
    <scope>NUCLEOTIDE SEQUENCE [LARGE SCALE GENOMIC DNA]</scope>
    <source>
        <strain>DSM 17343 / BCRC 17206 / CCUG 44338 / CIP 107171 / LMG 19424 / R1</strain>
    </source>
</reference>
<accession>B3R6D6</accession>
<evidence type="ECO:0000250" key="1"/>
<evidence type="ECO:0000255" key="2">
    <source>
        <dbReference type="HAMAP-Rule" id="MF_01109"/>
    </source>
</evidence>
<proteinExistence type="inferred from homology"/>
<name>OTC_CUPTR</name>
<sequence length="307" mass="34754">MSSTPIKHYLQFSDFTPDEYEYLLDRARILKAKFKNYETWHPLHDRTLAMIFEKNSTRTRLSFEAGIHQLGGHAVFLNTRDSQLGRGEPIEDAAQVISRMVDIIMIRTFGQDIIDRFAAHSRVPVINGLTNEYHPCQVLADVFTYIEQRGSIRGKTVAWIGDANNMAYTWIQAAERLGFTFHFSAPPGYQLDPVMVPASASGLVKVFDDPLAACQGASLVTTDVWTSMGFEAENDARKRAFKDWMVTTAMMDRAEPDALFMHCLPAHRGEEVEAAVIDGPKSVVWDEAENRLHVQKALMEYLLCGRY</sequence>
<keyword id="KW-0056">Arginine metabolism</keyword>
<keyword id="KW-0963">Cytoplasm</keyword>
<keyword id="KW-0808">Transferase</keyword>
<protein>
    <recommendedName>
        <fullName evidence="2">Ornithine carbamoyltransferase</fullName>
        <shortName evidence="2">OTCase</shortName>
        <ecNumber evidence="2">2.1.3.3</ecNumber>
    </recommendedName>
</protein>